<accession>A6QIV3</accession>
<name>ATP6_STAAE</name>
<keyword id="KW-0066">ATP synthesis</keyword>
<keyword id="KW-1003">Cell membrane</keyword>
<keyword id="KW-0138">CF(0)</keyword>
<keyword id="KW-0375">Hydrogen ion transport</keyword>
<keyword id="KW-0406">Ion transport</keyword>
<keyword id="KW-0472">Membrane</keyword>
<keyword id="KW-0812">Transmembrane</keyword>
<keyword id="KW-1133">Transmembrane helix</keyword>
<keyword id="KW-0813">Transport</keyword>
<comment type="function">
    <text evidence="1">Key component of the proton channel; it plays a direct role in the translocation of protons across the membrane.</text>
</comment>
<comment type="subunit">
    <text evidence="1">F-type ATPases have 2 components, CF(1) - the catalytic core - and CF(0) - the membrane proton channel. CF(1) has five subunits: alpha(3), beta(3), gamma(1), delta(1), epsilon(1). CF(0) has three main subunits: a(1), b(2) and c(9-12). The alpha and beta chains form an alternating ring which encloses part of the gamma chain. CF(1) is attached to CF(0) by a central stalk formed by the gamma and epsilon chains, while a peripheral stalk is formed by the delta and b chains.</text>
</comment>
<comment type="subcellular location">
    <subcellularLocation>
        <location evidence="1">Cell membrane</location>
        <topology evidence="1">Multi-pass membrane protein</topology>
    </subcellularLocation>
</comment>
<comment type="similarity">
    <text evidence="1">Belongs to the ATPase A chain family.</text>
</comment>
<dbReference type="EMBL" id="AP009351">
    <property type="protein sequence ID" value="BAF68285.1"/>
    <property type="molecule type" value="Genomic_DNA"/>
</dbReference>
<dbReference type="RefSeq" id="WP_000349655.1">
    <property type="nucleotide sequence ID" value="NZ_JBBIAE010000008.1"/>
</dbReference>
<dbReference type="SMR" id="A6QIV3"/>
<dbReference type="KEGG" id="sae:NWMN_2013"/>
<dbReference type="HOGENOM" id="CLU_041018_2_3_9"/>
<dbReference type="Proteomes" id="UP000006386">
    <property type="component" value="Chromosome"/>
</dbReference>
<dbReference type="GO" id="GO:0005886">
    <property type="term" value="C:plasma membrane"/>
    <property type="evidence" value="ECO:0007669"/>
    <property type="project" value="UniProtKB-SubCell"/>
</dbReference>
<dbReference type="GO" id="GO:0045259">
    <property type="term" value="C:proton-transporting ATP synthase complex"/>
    <property type="evidence" value="ECO:0007669"/>
    <property type="project" value="UniProtKB-KW"/>
</dbReference>
<dbReference type="GO" id="GO:0046933">
    <property type="term" value="F:proton-transporting ATP synthase activity, rotational mechanism"/>
    <property type="evidence" value="ECO:0007669"/>
    <property type="project" value="UniProtKB-UniRule"/>
</dbReference>
<dbReference type="GO" id="GO:0042777">
    <property type="term" value="P:proton motive force-driven plasma membrane ATP synthesis"/>
    <property type="evidence" value="ECO:0007669"/>
    <property type="project" value="TreeGrafter"/>
</dbReference>
<dbReference type="CDD" id="cd00310">
    <property type="entry name" value="ATP-synt_Fo_a_6"/>
    <property type="match status" value="1"/>
</dbReference>
<dbReference type="FunFam" id="1.20.120.220:FF:000005">
    <property type="entry name" value="ATP synthase subunit a"/>
    <property type="match status" value="1"/>
</dbReference>
<dbReference type="Gene3D" id="1.20.120.220">
    <property type="entry name" value="ATP synthase, F0 complex, subunit A"/>
    <property type="match status" value="1"/>
</dbReference>
<dbReference type="HAMAP" id="MF_01393">
    <property type="entry name" value="ATP_synth_a_bact"/>
    <property type="match status" value="1"/>
</dbReference>
<dbReference type="InterPro" id="IPR045082">
    <property type="entry name" value="ATP_syn_F0_a_bact/chloroplast"/>
</dbReference>
<dbReference type="InterPro" id="IPR000568">
    <property type="entry name" value="ATP_synth_F0_asu"/>
</dbReference>
<dbReference type="InterPro" id="IPR023011">
    <property type="entry name" value="ATP_synth_F0_asu_AS"/>
</dbReference>
<dbReference type="InterPro" id="IPR035908">
    <property type="entry name" value="F0_ATP_A_sf"/>
</dbReference>
<dbReference type="NCBIfam" id="TIGR01131">
    <property type="entry name" value="ATP_synt_6_or_A"/>
    <property type="match status" value="1"/>
</dbReference>
<dbReference type="NCBIfam" id="NF004479">
    <property type="entry name" value="PRK05815.1-4"/>
    <property type="match status" value="1"/>
</dbReference>
<dbReference type="PANTHER" id="PTHR42823">
    <property type="entry name" value="ATP SYNTHASE SUBUNIT A, CHLOROPLASTIC"/>
    <property type="match status" value="1"/>
</dbReference>
<dbReference type="PANTHER" id="PTHR42823:SF3">
    <property type="entry name" value="ATP SYNTHASE SUBUNIT A, CHLOROPLASTIC"/>
    <property type="match status" value="1"/>
</dbReference>
<dbReference type="Pfam" id="PF00119">
    <property type="entry name" value="ATP-synt_A"/>
    <property type="match status" value="1"/>
</dbReference>
<dbReference type="PRINTS" id="PR00123">
    <property type="entry name" value="ATPASEA"/>
</dbReference>
<dbReference type="SUPFAM" id="SSF81336">
    <property type="entry name" value="F1F0 ATP synthase subunit A"/>
    <property type="match status" value="1"/>
</dbReference>
<dbReference type="PROSITE" id="PS00449">
    <property type="entry name" value="ATPASE_A"/>
    <property type="match status" value="1"/>
</dbReference>
<organism>
    <name type="scientific">Staphylococcus aureus (strain Newman)</name>
    <dbReference type="NCBI Taxonomy" id="426430"/>
    <lineage>
        <taxon>Bacteria</taxon>
        <taxon>Bacillati</taxon>
        <taxon>Bacillota</taxon>
        <taxon>Bacilli</taxon>
        <taxon>Bacillales</taxon>
        <taxon>Staphylococcaceae</taxon>
        <taxon>Staphylococcus</taxon>
    </lineage>
</organism>
<gene>
    <name evidence="1" type="primary">atpB</name>
    <name type="ordered locus">NWMN_2013</name>
</gene>
<reference key="1">
    <citation type="journal article" date="2008" name="J. Bacteriol.">
        <title>Genome sequence of Staphylococcus aureus strain Newman and comparative analysis of staphylococcal genomes: polymorphism and evolution of two major pathogenicity islands.</title>
        <authorList>
            <person name="Baba T."/>
            <person name="Bae T."/>
            <person name="Schneewind O."/>
            <person name="Takeuchi F."/>
            <person name="Hiramatsu K."/>
        </authorList>
    </citation>
    <scope>NUCLEOTIDE SEQUENCE [LARGE SCALE GENOMIC DNA]</scope>
    <source>
        <strain>Newman</strain>
    </source>
</reference>
<sequence>MDHKSPLVSWNLFGFDIVFNLSSILMILVTAFLVFLLAIICTRNLKKRPTGKQNFVEWIFDFVRGIIEGNMAWKKGGQFHFLAVTLILYIFIANMLGLPFSIVTKDHTLWWKSPTADATVTLTLSTTIILLTHFYGIKMRGTKQYLKGYVQPFWPLAIINVFEEFTSTLTLGLRLYGNIFAGEILLTLLAGLFFNEPAWGWIISIPGLIVWQAFSIFVGTIQAYIFIMLSMVYMSHKVADEH</sequence>
<protein>
    <recommendedName>
        <fullName evidence="1">ATP synthase subunit a</fullName>
    </recommendedName>
    <alternativeName>
        <fullName evidence="1">ATP synthase F0 sector subunit a</fullName>
    </alternativeName>
    <alternativeName>
        <fullName evidence="1">F-ATPase subunit 6</fullName>
    </alternativeName>
</protein>
<feature type="chain" id="PRO_1000145311" description="ATP synthase subunit a">
    <location>
        <begin position="1"/>
        <end position="242"/>
    </location>
</feature>
<feature type="transmembrane region" description="Helical" evidence="1">
    <location>
        <begin position="21"/>
        <end position="41"/>
    </location>
</feature>
<feature type="transmembrane region" description="Helical" evidence="1">
    <location>
        <begin position="83"/>
        <end position="103"/>
    </location>
</feature>
<feature type="transmembrane region" description="Helical" evidence="1">
    <location>
        <begin position="117"/>
        <end position="137"/>
    </location>
</feature>
<feature type="transmembrane region" description="Helical" evidence="1">
    <location>
        <begin position="175"/>
        <end position="195"/>
    </location>
</feature>
<feature type="transmembrane region" description="Helical" evidence="1">
    <location>
        <begin position="198"/>
        <end position="218"/>
    </location>
</feature>
<evidence type="ECO:0000255" key="1">
    <source>
        <dbReference type="HAMAP-Rule" id="MF_01393"/>
    </source>
</evidence>
<proteinExistence type="inferred from homology"/>